<evidence type="ECO:0000250" key="1">
    <source>
        <dbReference type="UniProtKB" id="O55242"/>
    </source>
</evidence>
<evidence type="ECO:0000250" key="2">
    <source>
        <dbReference type="UniProtKB" id="Q5BJF2"/>
    </source>
</evidence>
<evidence type="ECO:0000250" key="3">
    <source>
        <dbReference type="UniProtKB" id="Q99720"/>
    </source>
</evidence>
<evidence type="ECO:0000250" key="4">
    <source>
        <dbReference type="UniProtKB" id="Q9R0C9"/>
    </source>
</evidence>
<evidence type="ECO:0000269" key="5">
    <source>
    </source>
</evidence>
<evidence type="ECO:0000269" key="6">
    <source>
    </source>
</evidence>
<evidence type="ECO:0000305" key="7"/>
<gene>
    <name type="primary">SIGMAR1</name>
    <name type="synonym">OPRS1</name>
</gene>
<reference key="1">
    <citation type="journal article" date="1996" name="Proc. Natl. Acad. Sci. U.S.A.">
        <title>Purification, molecular cloning, and expression of the mammalian sigma1-binding site.</title>
        <authorList>
            <person name="Hanner M."/>
            <person name="Moebius F.F."/>
            <person name="Flandorfer A."/>
            <person name="Knaus H.-G."/>
            <person name="Striessnig J."/>
            <person name="Kempner E."/>
            <person name="Glossmann H."/>
        </authorList>
    </citation>
    <scope>NUCLEOTIDE SEQUENCE [MRNA]</scope>
    <scope>PROTEIN SEQUENCE OF 120-130; 143-165; 176-180 AND 209-217</scope>
    <scope>TISSUE SPECIFICITY</scope>
    <source>
        <strain>Pirbright white</strain>
        <tissue>Liver</tissue>
    </source>
</reference>
<reference key="2">
    <citation type="journal article" date="1999" name="FEBS Lett.">
        <title>Amino acid residues in the transmembrane domain of the type 1 sigma receptor critical for ligand binding.</title>
        <authorList>
            <person name="Yamamoto H."/>
            <person name="Miura R."/>
            <person name="Yamamoto T."/>
            <person name="Shinohara K."/>
            <person name="Watanabe M."/>
            <person name="Okuyama S."/>
            <person name="Nakazato A."/>
            <person name="Nukada T."/>
        </authorList>
    </citation>
    <scope>MUTAGENESIS OF SER-99; TYR-103 AND 105-LEU--LEU-106</scope>
</reference>
<protein>
    <recommendedName>
        <fullName>Sigma non-opioid intracellular receptor 1</fullName>
    </recommendedName>
    <alternativeName>
        <fullName>Sigma 1-type opioid receptor</fullName>
        <shortName>Sigma1-receptor</shortName>
        <shortName>Sigma1R</shortName>
    </alternativeName>
    <alternativeName>
        <fullName>Sterol isomerase-like protein</fullName>
    </alternativeName>
</protein>
<keyword id="KW-0965">Cell junction</keyword>
<keyword id="KW-1003">Cell membrane</keyword>
<keyword id="KW-0966">Cell projection</keyword>
<keyword id="KW-0968">Cytoplasmic vesicle</keyword>
<keyword id="KW-0903">Direct protein sequencing</keyword>
<keyword id="KW-0256">Endoplasmic reticulum</keyword>
<keyword id="KW-0551">Lipid droplet</keyword>
<keyword id="KW-0445">Lipid transport</keyword>
<keyword id="KW-0472">Membrane</keyword>
<keyword id="KW-0539">Nucleus</keyword>
<keyword id="KW-0628">Postsynaptic cell membrane</keyword>
<keyword id="KW-0675">Receptor</keyword>
<keyword id="KW-1185">Reference proteome</keyword>
<keyword id="KW-0770">Synapse</keyword>
<keyword id="KW-0812">Transmembrane</keyword>
<keyword id="KW-1133">Transmembrane helix</keyword>
<keyword id="KW-0813">Transport</keyword>
<name>SGMR1_CAVPO</name>
<feature type="chain" id="PRO_0000268651" description="Sigma non-opioid intracellular receptor 1">
    <location>
        <begin position="1"/>
        <end position="223"/>
    </location>
</feature>
<feature type="topological domain" description="Lumenal" evidence="3">
    <location>
        <begin position="1"/>
        <end position="9"/>
    </location>
</feature>
<feature type="transmembrane region" description="Helical" evidence="3">
    <location>
        <begin position="10"/>
        <end position="30"/>
    </location>
</feature>
<feature type="topological domain" description="Cytoplasmic" evidence="3">
    <location>
        <begin position="31"/>
        <end position="223"/>
    </location>
</feature>
<feature type="region of interest" description="Targeting to endoplasmic reticulum-associated lipid droplets" evidence="1">
    <location>
        <begin position="2"/>
        <end position="8"/>
    </location>
</feature>
<feature type="region of interest" description="Important for ligand-binding" evidence="5">
    <location>
        <begin position="99"/>
        <end position="106"/>
    </location>
</feature>
<feature type="region of interest" description="C-terminal hydrophobic region" evidence="7">
    <location>
        <begin position="177"/>
        <end position="223"/>
    </location>
</feature>
<feature type="site" description="Important for ligand binding" evidence="3">
    <location>
        <position position="126"/>
    </location>
</feature>
<feature type="site" description="Important for ligand binding" evidence="3">
    <location>
        <position position="172"/>
    </location>
</feature>
<feature type="mutagenesis site" description="Alters pentazocine and NE-100-binding. No effect on pentazocine-binding and same effect on NE-100-binding; when associated with 105-AA-106." evidence="5">
    <original>S</original>
    <variation>A</variation>
    <location>
        <position position="99"/>
    </location>
</feature>
<feature type="mutagenesis site" description="Alters pentazocine and NE-100-binding." evidence="5">
    <original>Y</original>
    <variation>F</variation>
    <location>
        <position position="103"/>
    </location>
</feature>
<feature type="mutagenesis site" description="Alters pentazocine and NE-100-binding. No effect on pentazocine-binding and same effect on NE-100-binding; when associated with A-99." evidence="5">
    <original>LL</original>
    <variation>AA</variation>
    <location>
        <begin position="105"/>
        <end position="106"/>
    </location>
</feature>
<proteinExistence type="evidence at protein level"/>
<sequence>MQWAVGRRWLWVALFLAAVAVLTQIVWLWLGTQNFVFQREEIAQLARQYAGLDHELAFSKLIVELRRLHPVHVLPDEELQWVFVNAGGWMGAMCLLHASLSEYVLLFGTALGSPRHSGRYWAEISDTIISGTFHQWREGTTKSEVFYPGETVVHGPGEATAVEWGPNTWMVEYGRGVIPSTLGFALADTVFSTQDFLTLFYTLRVYARALQLELTTYLFGQDP</sequence>
<organism>
    <name type="scientific">Cavia porcellus</name>
    <name type="common">Guinea pig</name>
    <dbReference type="NCBI Taxonomy" id="10141"/>
    <lineage>
        <taxon>Eukaryota</taxon>
        <taxon>Metazoa</taxon>
        <taxon>Chordata</taxon>
        <taxon>Craniata</taxon>
        <taxon>Vertebrata</taxon>
        <taxon>Euteleostomi</taxon>
        <taxon>Mammalia</taxon>
        <taxon>Eutheria</taxon>
        <taxon>Euarchontoglires</taxon>
        <taxon>Glires</taxon>
        <taxon>Rodentia</taxon>
        <taxon>Hystricomorpha</taxon>
        <taxon>Caviidae</taxon>
        <taxon>Cavia</taxon>
    </lineage>
</organism>
<comment type="function">
    <text evidence="1 3">Functions in lipid transport from the endoplasmic reticulum and is involved in a wide array of cellular functions probably through regulation of the biogenesis of lipid microdomains at the plasma membrane. Involved in the regulation of different receptors it plays a role in BDNF signaling and EGF signaling. Also regulates ion channels like the potassium channel and could modulate neurotransmitter release. Plays a role in calcium signaling through modulation together with ANK2 of the ITP3R-dependent calcium efflux at the endoplasmic reticulum. Plays a role in several other cell functions including proliferation, survival and death. Originally identified for its ability to bind various psychoactive drugs it is involved in learning processes, memory and mood alteration (By similarity). Necessary for proper mitochondrial axonal transport in motor neurons, in particular the retrograde movement of mitochondria. Plays a role in protecting cells against oxidative stress-induced cell death via its interaction with RNF112 (By similarity).</text>
</comment>
<comment type="subunit">
    <text evidence="1 3 4">Homotrimer. Forms a ternary complex with ANK2 and ITPR3. The complex is disrupted by agonists. Interacts with KCNA4. Interacts with KCNA2; cocaine consumption leads to increased interaction. Interacts with RNF112 in an oxidative stress-regulated manner.</text>
</comment>
<comment type="subcellular location">
    <subcellularLocation>
        <location evidence="3">Nucleus inner membrane</location>
    </subcellularLocation>
    <subcellularLocation>
        <location evidence="3">Nucleus outer membrane</location>
    </subcellularLocation>
    <subcellularLocation>
        <location evidence="3">Nucleus envelope</location>
    </subcellularLocation>
    <subcellularLocation>
        <location evidence="3">Cytoplasmic vesicle</location>
    </subcellularLocation>
    <subcellularLocation>
        <location evidence="3">Endoplasmic reticulum membrane</location>
    </subcellularLocation>
    <subcellularLocation>
        <location evidence="3">Membrane</location>
        <topology evidence="3">Single-pass membrane protein</topology>
    </subcellularLocation>
    <subcellularLocation>
        <location evidence="1">Lipid droplet</location>
    </subcellularLocation>
    <subcellularLocation>
        <location evidence="3">Cell junction</location>
    </subcellularLocation>
    <subcellularLocation>
        <location evidence="3">Cell membrane</location>
    </subcellularLocation>
    <subcellularLocation>
        <location evidence="3">Cell projection</location>
        <location evidence="3">Growth cone</location>
    </subcellularLocation>
    <subcellularLocation>
        <location evidence="3">Postsynaptic density membrane</location>
    </subcellularLocation>
    <text evidence="1 3">During interphase, detected at the inner and outer nuclear membrane and the endoplasmic reticulum. Detected on cytoplasmic vesicles during mitosis. Targeted to lipid droplets, cholesterol and galactosylceramide-enriched domains of the endoplasmic reticulum (By similarity). Enriched at cell-cell communication regions, growth cone and postsynaptic structures. Localization is modulated by ligand-binding. In motor neurons it is enriched at cholinergic postsynaptic densities (By similarity).</text>
</comment>
<comment type="tissue specificity">
    <text evidence="6">Ubiquitously expressed with higher expression in liver, kidney and steroid-producing tissues such as placenta, ovary and adrenal gland.</text>
</comment>
<comment type="domain">
    <text evidence="3">The C-terminal helices form a flat, hydrophobic surface that is probably tightly associated with the cytosolic surface of the endoplasmic reticulum membrane.</text>
</comment>
<comment type="miscellaneous">
    <text evidence="2">Sigma receptors are classified into two subtypes (Sigma-1 and Sigma-2) based on their different pharmacological profile.</text>
</comment>
<comment type="similarity">
    <text evidence="7">Belongs to the ERG2 family.</text>
</comment>
<accession>Q60492</accession>
<dbReference type="EMBL" id="Z66537">
    <property type="protein sequence ID" value="CAA91441.1"/>
    <property type="molecule type" value="mRNA"/>
</dbReference>
<dbReference type="RefSeq" id="NP_001166463.1">
    <property type="nucleotide sequence ID" value="NM_001172992.1"/>
</dbReference>
<dbReference type="SMR" id="Q60492"/>
<dbReference type="FunCoup" id="Q60492">
    <property type="interactions" value="566"/>
</dbReference>
<dbReference type="STRING" id="10141.ENSCPOP00000031165"/>
<dbReference type="BindingDB" id="Q60492"/>
<dbReference type="ChEMBL" id="CHEMBL4153"/>
<dbReference type="DrugCentral" id="Q60492"/>
<dbReference type="GeneID" id="100135589"/>
<dbReference type="KEGG" id="cpoc:100135589"/>
<dbReference type="CTD" id="10280"/>
<dbReference type="eggNOG" id="KOG4143">
    <property type="taxonomic scope" value="Eukaryota"/>
</dbReference>
<dbReference type="InParanoid" id="Q60492"/>
<dbReference type="OrthoDB" id="347124at2759"/>
<dbReference type="PRO" id="PR:Q60492"/>
<dbReference type="Proteomes" id="UP000005447">
    <property type="component" value="Unassembled WGS sequence"/>
</dbReference>
<dbReference type="GO" id="GO:0070161">
    <property type="term" value="C:anchoring junction"/>
    <property type="evidence" value="ECO:0007669"/>
    <property type="project" value="UniProtKB-SubCell"/>
</dbReference>
<dbReference type="GO" id="GO:0031410">
    <property type="term" value="C:cytoplasmic vesicle"/>
    <property type="evidence" value="ECO:0007669"/>
    <property type="project" value="UniProtKB-KW"/>
</dbReference>
<dbReference type="GO" id="GO:0005789">
    <property type="term" value="C:endoplasmic reticulum membrane"/>
    <property type="evidence" value="ECO:0007669"/>
    <property type="project" value="UniProtKB-SubCell"/>
</dbReference>
<dbReference type="GO" id="GO:0030426">
    <property type="term" value="C:growth cone"/>
    <property type="evidence" value="ECO:0007669"/>
    <property type="project" value="UniProtKB-SubCell"/>
</dbReference>
<dbReference type="GO" id="GO:0005811">
    <property type="term" value="C:lipid droplet"/>
    <property type="evidence" value="ECO:0007669"/>
    <property type="project" value="UniProtKB-SubCell"/>
</dbReference>
<dbReference type="GO" id="GO:0016020">
    <property type="term" value="C:membrane"/>
    <property type="evidence" value="ECO:0000250"/>
    <property type="project" value="UniProtKB"/>
</dbReference>
<dbReference type="GO" id="GO:0005637">
    <property type="term" value="C:nuclear inner membrane"/>
    <property type="evidence" value="ECO:0007669"/>
    <property type="project" value="UniProtKB-SubCell"/>
</dbReference>
<dbReference type="GO" id="GO:0005640">
    <property type="term" value="C:nuclear outer membrane"/>
    <property type="evidence" value="ECO:0007669"/>
    <property type="project" value="UniProtKB-SubCell"/>
</dbReference>
<dbReference type="GO" id="GO:0014069">
    <property type="term" value="C:postsynaptic density"/>
    <property type="evidence" value="ECO:0000250"/>
    <property type="project" value="UniProtKB"/>
</dbReference>
<dbReference type="GO" id="GO:0098839">
    <property type="term" value="C:postsynaptic density membrane"/>
    <property type="evidence" value="ECO:0007669"/>
    <property type="project" value="UniProtKB-SubCell"/>
</dbReference>
<dbReference type="GO" id="GO:0006869">
    <property type="term" value="P:lipid transport"/>
    <property type="evidence" value="ECO:0007669"/>
    <property type="project" value="UniProtKB-KW"/>
</dbReference>
<dbReference type="GO" id="GO:0043523">
    <property type="term" value="P:regulation of neuron apoptotic process"/>
    <property type="evidence" value="ECO:0000250"/>
    <property type="project" value="UniProtKB"/>
</dbReference>
<dbReference type="InterPro" id="IPR006716">
    <property type="entry name" value="ERG2_sigma1_rcpt-like"/>
</dbReference>
<dbReference type="PANTHER" id="PTHR10868">
    <property type="entry name" value="SIGMA 1-TYPE OPIOID RECEPTOR-RELATED"/>
    <property type="match status" value="1"/>
</dbReference>
<dbReference type="PANTHER" id="PTHR10868:SF1">
    <property type="entry name" value="SIGMA NON-OPIOID INTRACELLULAR RECEPTOR 1"/>
    <property type="match status" value="1"/>
</dbReference>
<dbReference type="Pfam" id="PF04622">
    <property type="entry name" value="ERG2_Sigma1R"/>
    <property type="match status" value="1"/>
</dbReference>